<protein>
    <recommendedName>
        <fullName evidence="1">Thymidylate synthase</fullName>
        <shortName evidence="1">TS</shortName>
        <shortName evidence="1">TSase</shortName>
        <ecNumber evidence="1">2.1.1.45</ecNumber>
    </recommendedName>
</protein>
<proteinExistence type="inferred from homology"/>
<gene>
    <name evidence="1" type="primary">thyA</name>
    <name type="ordered locus">Sama_0867</name>
</gene>
<evidence type="ECO:0000255" key="1">
    <source>
        <dbReference type="HAMAP-Rule" id="MF_00008"/>
    </source>
</evidence>
<feature type="chain" id="PRO_1000000667" description="Thymidylate synthase">
    <location>
        <begin position="1"/>
        <end position="264"/>
    </location>
</feature>
<feature type="active site" description="Nucleophile" evidence="1">
    <location>
        <position position="146"/>
    </location>
</feature>
<feature type="binding site" description="in other chain" evidence="1">
    <location>
        <position position="21"/>
    </location>
    <ligand>
        <name>dUMP</name>
        <dbReference type="ChEBI" id="CHEBI:246422"/>
        <note>ligand shared between dimeric partners</note>
    </ligand>
</feature>
<feature type="binding site" evidence="1">
    <location>
        <position position="51"/>
    </location>
    <ligand>
        <name>(6R)-5,10-methylene-5,6,7,8-tetrahydrofolate</name>
        <dbReference type="ChEBI" id="CHEBI:15636"/>
    </ligand>
</feature>
<feature type="binding site" evidence="1">
    <location>
        <begin position="126"/>
        <end position="127"/>
    </location>
    <ligand>
        <name>dUMP</name>
        <dbReference type="ChEBI" id="CHEBI:246422"/>
        <note>ligand shared between dimeric partners</note>
    </ligand>
</feature>
<feature type="binding site" description="in other chain" evidence="1">
    <location>
        <begin position="166"/>
        <end position="169"/>
    </location>
    <ligand>
        <name>dUMP</name>
        <dbReference type="ChEBI" id="CHEBI:246422"/>
        <note>ligand shared between dimeric partners</note>
    </ligand>
</feature>
<feature type="binding site" evidence="1">
    <location>
        <position position="169"/>
    </location>
    <ligand>
        <name>(6R)-5,10-methylene-5,6,7,8-tetrahydrofolate</name>
        <dbReference type="ChEBI" id="CHEBI:15636"/>
    </ligand>
</feature>
<feature type="binding site" description="in other chain" evidence="1">
    <location>
        <position position="177"/>
    </location>
    <ligand>
        <name>dUMP</name>
        <dbReference type="ChEBI" id="CHEBI:246422"/>
        <note>ligand shared between dimeric partners</note>
    </ligand>
</feature>
<feature type="binding site" description="in other chain" evidence="1">
    <location>
        <begin position="207"/>
        <end position="209"/>
    </location>
    <ligand>
        <name>dUMP</name>
        <dbReference type="ChEBI" id="CHEBI:246422"/>
        <note>ligand shared between dimeric partners</note>
    </ligand>
</feature>
<feature type="binding site" evidence="1">
    <location>
        <position position="263"/>
    </location>
    <ligand>
        <name>(6R)-5,10-methylene-5,6,7,8-tetrahydrofolate</name>
        <dbReference type="ChEBI" id="CHEBI:15636"/>
    </ligand>
</feature>
<keyword id="KW-0963">Cytoplasm</keyword>
<keyword id="KW-0489">Methyltransferase</keyword>
<keyword id="KW-0545">Nucleotide biosynthesis</keyword>
<keyword id="KW-1185">Reference proteome</keyword>
<keyword id="KW-0808">Transferase</keyword>
<organism>
    <name type="scientific">Shewanella amazonensis (strain ATCC BAA-1098 / SB2B)</name>
    <dbReference type="NCBI Taxonomy" id="326297"/>
    <lineage>
        <taxon>Bacteria</taxon>
        <taxon>Pseudomonadati</taxon>
        <taxon>Pseudomonadota</taxon>
        <taxon>Gammaproteobacteria</taxon>
        <taxon>Alteromonadales</taxon>
        <taxon>Shewanellaceae</taxon>
        <taxon>Shewanella</taxon>
    </lineage>
</organism>
<dbReference type="EC" id="2.1.1.45" evidence="1"/>
<dbReference type="EMBL" id="CP000507">
    <property type="protein sequence ID" value="ABL99074.1"/>
    <property type="molecule type" value="Genomic_DNA"/>
</dbReference>
<dbReference type="RefSeq" id="WP_011758984.1">
    <property type="nucleotide sequence ID" value="NC_008700.1"/>
</dbReference>
<dbReference type="SMR" id="A1S3W8"/>
<dbReference type="STRING" id="326297.Sama_0867"/>
<dbReference type="KEGG" id="saz:Sama_0867"/>
<dbReference type="eggNOG" id="COG0207">
    <property type="taxonomic scope" value="Bacteria"/>
</dbReference>
<dbReference type="HOGENOM" id="CLU_021669_0_0_6"/>
<dbReference type="OrthoDB" id="9774633at2"/>
<dbReference type="UniPathway" id="UPA00575"/>
<dbReference type="Proteomes" id="UP000009175">
    <property type="component" value="Chromosome"/>
</dbReference>
<dbReference type="GO" id="GO:0005829">
    <property type="term" value="C:cytosol"/>
    <property type="evidence" value="ECO:0007669"/>
    <property type="project" value="TreeGrafter"/>
</dbReference>
<dbReference type="GO" id="GO:0004799">
    <property type="term" value="F:thymidylate synthase activity"/>
    <property type="evidence" value="ECO:0007669"/>
    <property type="project" value="UniProtKB-UniRule"/>
</dbReference>
<dbReference type="GO" id="GO:0006231">
    <property type="term" value="P:dTMP biosynthetic process"/>
    <property type="evidence" value="ECO:0007669"/>
    <property type="project" value="UniProtKB-UniRule"/>
</dbReference>
<dbReference type="GO" id="GO:0006235">
    <property type="term" value="P:dTTP biosynthetic process"/>
    <property type="evidence" value="ECO:0007669"/>
    <property type="project" value="UniProtKB-UniRule"/>
</dbReference>
<dbReference type="GO" id="GO:0032259">
    <property type="term" value="P:methylation"/>
    <property type="evidence" value="ECO:0007669"/>
    <property type="project" value="UniProtKB-KW"/>
</dbReference>
<dbReference type="CDD" id="cd00351">
    <property type="entry name" value="TS_Pyrimidine_HMase"/>
    <property type="match status" value="1"/>
</dbReference>
<dbReference type="FunFam" id="3.30.572.10:FF:000001">
    <property type="entry name" value="Thymidylate synthase"/>
    <property type="match status" value="1"/>
</dbReference>
<dbReference type="Gene3D" id="3.30.572.10">
    <property type="entry name" value="Thymidylate synthase/dCMP hydroxymethylase domain"/>
    <property type="match status" value="1"/>
</dbReference>
<dbReference type="HAMAP" id="MF_00008">
    <property type="entry name" value="Thymidy_synth_bact"/>
    <property type="match status" value="1"/>
</dbReference>
<dbReference type="InterPro" id="IPR045097">
    <property type="entry name" value="Thymidate_synth/dCMP_Mease"/>
</dbReference>
<dbReference type="InterPro" id="IPR023451">
    <property type="entry name" value="Thymidate_synth/dCMP_Mease_dom"/>
</dbReference>
<dbReference type="InterPro" id="IPR036926">
    <property type="entry name" value="Thymidate_synth/dCMP_Mease_sf"/>
</dbReference>
<dbReference type="InterPro" id="IPR000398">
    <property type="entry name" value="Thymidylate_synthase"/>
</dbReference>
<dbReference type="InterPro" id="IPR020940">
    <property type="entry name" value="Thymidylate_synthase_AS"/>
</dbReference>
<dbReference type="NCBIfam" id="NF002497">
    <property type="entry name" value="PRK01827.1-3"/>
    <property type="match status" value="1"/>
</dbReference>
<dbReference type="NCBIfam" id="NF002499">
    <property type="entry name" value="PRK01827.1-5"/>
    <property type="match status" value="1"/>
</dbReference>
<dbReference type="NCBIfam" id="TIGR03284">
    <property type="entry name" value="thym_sym"/>
    <property type="match status" value="2"/>
</dbReference>
<dbReference type="PANTHER" id="PTHR11548:SF9">
    <property type="entry name" value="THYMIDYLATE SYNTHASE"/>
    <property type="match status" value="1"/>
</dbReference>
<dbReference type="PANTHER" id="PTHR11548">
    <property type="entry name" value="THYMIDYLATE SYNTHASE 1"/>
    <property type="match status" value="1"/>
</dbReference>
<dbReference type="Pfam" id="PF00303">
    <property type="entry name" value="Thymidylat_synt"/>
    <property type="match status" value="1"/>
</dbReference>
<dbReference type="PRINTS" id="PR00108">
    <property type="entry name" value="THYMDSNTHASE"/>
</dbReference>
<dbReference type="SUPFAM" id="SSF55831">
    <property type="entry name" value="Thymidylate synthase/dCMP hydroxymethylase"/>
    <property type="match status" value="1"/>
</dbReference>
<dbReference type="PROSITE" id="PS00091">
    <property type="entry name" value="THYMIDYLATE_SYNTHASE"/>
    <property type="match status" value="1"/>
</dbReference>
<name>TYSY_SHEAM</name>
<comment type="function">
    <text evidence="1">Catalyzes the reductive methylation of 2'-deoxyuridine-5'-monophosphate (dUMP) to 2'-deoxythymidine-5'-monophosphate (dTMP) while utilizing 5,10-methylenetetrahydrofolate (mTHF) as the methyl donor and reductant in the reaction, yielding dihydrofolate (DHF) as a by-product. This enzymatic reaction provides an intracellular de novo source of dTMP, an essential precursor for DNA biosynthesis.</text>
</comment>
<comment type="catalytic activity">
    <reaction evidence="1">
        <text>dUMP + (6R)-5,10-methylene-5,6,7,8-tetrahydrofolate = 7,8-dihydrofolate + dTMP</text>
        <dbReference type="Rhea" id="RHEA:12104"/>
        <dbReference type="ChEBI" id="CHEBI:15636"/>
        <dbReference type="ChEBI" id="CHEBI:57451"/>
        <dbReference type="ChEBI" id="CHEBI:63528"/>
        <dbReference type="ChEBI" id="CHEBI:246422"/>
        <dbReference type="EC" id="2.1.1.45"/>
    </reaction>
</comment>
<comment type="pathway">
    <text evidence="1">Pyrimidine metabolism; dTTP biosynthesis.</text>
</comment>
<comment type="subunit">
    <text evidence="1">Homodimer.</text>
</comment>
<comment type="subcellular location">
    <subcellularLocation>
        <location evidence="1">Cytoplasm</location>
    </subcellularLocation>
</comment>
<comment type="similarity">
    <text evidence="1">Belongs to the thymidylate synthase family. Bacterial-type ThyA subfamily.</text>
</comment>
<sequence length="264" mass="30411">MKQYLDLMKHILDKGTDKSDRTGTGTRSVFGYQMRFDLNEGFPLVTTKKCHLRSIIHELLWFLKGETNVDYLHENKVSIWDEWADEKGNLGPVYGAQWRSWPTPDGRHIDQISQVIEQIKATPDSRRLIVSAWNVGELDKMALAPCHAFFQFYVADGKLSCQLYQRSCDVFLGLPFNIASYALLTMMVAQQCNLGLGDFVWTGGDTHLYSNHMEQTQLQLSREPRPLPTMKILRHPESIFDYRFEDFELSGYDPHPHIKAPVAI</sequence>
<accession>A1S3W8</accession>
<reference key="1">
    <citation type="submission" date="2006-12" db="EMBL/GenBank/DDBJ databases">
        <title>Complete sequence of Shewanella amazonensis SB2B.</title>
        <authorList>
            <consortium name="US DOE Joint Genome Institute"/>
            <person name="Copeland A."/>
            <person name="Lucas S."/>
            <person name="Lapidus A."/>
            <person name="Barry K."/>
            <person name="Detter J.C."/>
            <person name="Glavina del Rio T."/>
            <person name="Hammon N."/>
            <person name="Israni S."/>
            <person name="Dalin E."/>
            <person name="Tice H."/>
            <person name="Pitluck S."/>
            <person name="Munk A.C."/>
            <person name="Brettin T."/>
            <person name="Bruce D."/>
            <person name="Han C."/>
            <person name="Tapia R."/>
            <person name="Gilna P."/>
            <person name="Schmutz J."/>
            <person name="Larimer F."/>
            <person name="Land M."/>
            <person name="Hauser L."/>
            <person name="Kyrpides N."/>
            <person name="Mikhailova N."/>
            <person name="Fredrickson J."/>
            <person name="Richardson P."/>
        </authorList>
    </citation>
    <scope>NUCLEOTIDE SEQUENCE [LARGE SCALE GENOMIC DNA]</scope>
    <source>
        <strain>ATCC BAA-1098 / SB2B</strain>
    </source>
</reference>